<name>SYH_HALSA</name>
<keyword id="KW-0030">Aminoacyl-tRNA synthetase</keyword>
<keyword id="KW-0067">ATP-binding</keyword>
<keyword id="KW-0963">Cytoplasm</keyword>
<keyword id="KW-0436">Ligase</keyword>
<keyword id="KW-0547">Nucleotide-binding</keyword>
<keyword id="KW-0648">Protein biosynthesis</keyword>
<keyword id="KW-1185">Reference proteome</keyword>
<sequence length="432" mass="46831">MYDRLKGFRDFYPAEMGPRRAAIDAIEDAAASYGFREVGTPAMERTEMYVDKSGAEIVDELYSFTDQGGRDVALTPELTPTVARMVVAKQQALSKPIKWYSSRPFWRYEEPQQGRFREFYQTNLDIFGTSDPRADAEVLAVAADGLTSLGLTGADFEFRVSHRDILGGLLAAFDATVDTEAAIRTVDKREKIERAAYLDDLAAAGLSYDQAEQFDDLLDGDDLDALVSFAGTDRVRDAVANLRNVLDAAETLGVRQYCDVSLTTARGLDYYTGVVFECFDSTGDVGRAVFGGGRYDDLIERFGGQPTPAVGVAPGHATLNLLLENAGVLPDDEFTPDYYVLQVGDTDAEAADVASALRERGNRVDTDITGRSFGAQMNYADNVGADTVVIVGEQDLADGNVTIKNMASGEQTTAPIAAFPGAHDAPRVEDFA</sequence>
<evidence type="ECO:0000250" key="1"/>
<evidence type="ECO:0000305" key="2"/>
<accession>Q9HNP5</accession>
<reference key="1">
    <citation type="journal article" date="2000" name="Proc. Natl. Acad. Sci. U.S.A.">
        <title>Genome sequence of Halobacterium species NRC-1.</title>
        <authorList>
            <person name="Ng W.V."/>
            <person name="Kennedy S.P."/>
            <person name="Mahairas G.G."/>
            <person name="Berquist B."/>
            <person name="Pan M."/>
            <person name="Shukla H.D."/>
            <person name="Lasky S.R."/>
            <person name="Baliga N.S."/>
            <person name="Thorsson V."/>
            <person name="Sbrogna J."/>
            <person name="Swartzell S."/>
            <person name="Weir D."/>
            <person name="Hall J."/>
            <person name="Dahl T.A."/>
            <person name="Welti R."/>
            <person name="Goo Y.A."/>
            <person name="Leithauser B."/>
            <person name="Keller K."/>
            <person name="Cruz R."/>
            <person name="Danson M.J."/>
            <person name="Hough D.W."/>
            <person name="Maddocks D.G."/>
            <person name="Jablonski P.E."/>
            <person name="Krebs M.P."/>
            <person name="Angevine C.M."/>
            <person name="Dale H."/>
            <person name="Isenbarger T.A."/>
            <person name="Peck R.F."/>
            <person name="Pohlschroder M."/>
            <person name="Spudich J.L."/>
            <person name="Jung K.-H."/>
            <person name="Alam M."/>
            <person name="Freitas T."/>
            <person name="Hou S."/>
            <person name="Daniels C.J."/>
            <person name="Dennis P.P."/>
            <person name="Omer A.D."/>
            <person name="Ebhardt H."/>
            <person name="Lowe T.M."/>
            <person name="Liang P."/>
            <person name="Riley M."/>
            <person name="Hood L."/>
            <person name="DasSarma S."/>
        </authorList>
    </citation>
    <scope>NUCLEOTIDE SEQUENCE [LARGE SCALE GENOMIC DNA]</scope>
    <source>
        <strain>ATCC 700922 / JCM 11081 / NRC-1</strain>
    </source>
</reference>
<feature type="chain" id="PRO_0000136310" description="Histidine--tRNA ligase">
    <location>
        <begin position="1"/>
        <end position="432"/>
    </location>
</feature>
<comment type="catalytic activity">
    <reaction>
        <text>tRNA(His) + L-histidine + ATP = L-histidyl-tRNA(His) + AMP + diphosphate + H(+)</text>
        <dbReference type="Rhea" id="RHEA:17313"/>
        <dbReference type="Rhea" id="RHEA-COMP:9665"/>
        <dbReference type="Rhea" id="RHEA-COMP:9689"/>
        <dbReference type="ChEBI" id="CHEBI:15378"/>
        <dbReference type="ChEBI" id="CHEBI:30616"/>
        <dbReference type="ChEBI" id="CHEBI:33019"/>
        <dbReference type="ChEBI" id="CHEBI:57595"/>
        <dbReference type="ChEBI" id="CHEBI:78442"/>
        <dbReference type="ChEBI" id="CHEBI:78527"/>
        <dbReference type="ChEBI" id="CHEBI:456215"/>
        <dbReference type="EC" id="6.1.1.21"/>
    </reaction>
</comment>
<comment type="subcellular location">
    <subcellularLocation>
        <location evidence="1">Cytoplasm</location>
    </subcellularLocation>
</comment>
<comment type="similarity">
    <text evidence="2">Belongs to the class-II aminoacyl-tRNA synthetase family.</text>
</comment>
<organism>
    <name type="scientific">Halobacterium salinarum (strain ATCC 700922 / JCM 11081 / NRC-1)</name>
    <name type="common">Halobacterium halobium</name>
    <dbReference type="NCBI Taxonomy" id="64091"/>
    <lineage>
        <taxon>Archaea</taxon>
        <taxon>Methanobacteriati</taxon>
        <taxon>Methanobacteriota</taxon>
        <taxon>Stenosarchaea group</taxon>
        <taxon>Halobacteria</taxon>
        <taxon>Halobacteriales</taxon>
        <taxon>Halobacteriaceae</taxon>
        <taxon>Halobacterium</taxon>
        <taxon>Halobacterium salinarum NRC-34001</taxon>
    </lineage>
</organism>
<protein>
    <recommendedName>
        <fullName>Histidine--tRNA ligase</fullName>
        <ecNumber>6.1.1.21</ecNumber>
    </recommendedName>
    <alternativeName>
        <fullName>Histidyl-tRNA synthetase</fullName>
        <shortName>HisRS</shortName>
    </alternativeName>
</protein>
<proteinExistence type="inferred from homology"/>
<gene>
    <name type="primary">hisS</name>
    <name type="ordered locus">VNG_2005G</name>
</gene>
<dbReference type="EC" id="6.1.1.21"/>
<dbReference type="EMBL" id="AE004437">
    <property type="protein sequence ID" value="AAG20175.1"/>
    <property type="molecule type" value="Genomic_DNA"/>
</dbReference>
<dbReference type="PIR" id="C84351">
    <property type="entry name" value="C84351"/>
</dbReference>
<dbReference type="RefSeq" id="WP_010903476.1">
    <property type="nucleotide sequence ID" value="NC_002607.1"/>
</dbReference>
<dbReference type="SMR" id="Q9HNP5"/>
<dbReference type="FunCoup" id="Q9HNP5">
    <property type="interactions" value="165"/>
</dbReference>
<dbReference type="STRING" id="64091.VNG_2005G"/>
<dbReference type="PaxDb" id="64091-VNG_2005G"/>
<dbReference type="GeneID" id="89350192"/>
<dbReference type="KEGG" id="hal:VNG_2005G"/>
<dbReference type="PATRIC" id="fig|64091.14.peg.1532"/>
<dbReference type="HOGENOM" id="CLU_025113_3_1_2"/>
<dbReference type="InParanoid" id="Q9HNP5"/>
<dbReference type="OrthoDB" id="8659at2157"/>
<dbReference type="PhylomeDB" id="Q9HNP5"/>
<dbReference type="Proteomes" id="UP000000554">
    <property type="component" value="Chromosome"/>
</dbReference>
<dbReference type="GO" id="GO:0005737">
    <property type="term" value="C:cytoplasm"/>
    <property type="evidence" value="ECO:0007669"/>
    <property type="project" value="UniProtKB-SubCell"/>
</dbReference>
<dbReference type="GO" id="GO:0005524">
    <property type="term" value="F:ATP binding"/>
    <property type="evidence" value="ECO:0007669"/>
    <property type="project" value="UniProtKB-UniRule"/>
</dbReference>
<dbReference type="GO" id="GO:0004821">
    <property type="term" value="F:histidine-tRNA ligase activity"/>
    <property type="evidence" value="ECO:0000318"/>
    <property type="project" value="GO_Central"/>
</dbReference>
<dbReference type="GO" id="GO:0006427">
    <property type="term" value="P:histidyl-tRNA aminoacylation"/>
    <property type="evidence" value="ECO:0000318"/>
    <property type="project" value="GO_Central"/>
</dbReference>
<dbReference type="CDD" id="cd00773">
    <property type="entry name" value="HisRS-like_core"/>
    <property type="match status" value="1"/>
</dbReference>
<dbReference type="CDD" id="cd00859">
    <property type="entry name" value="HisRS_anticodon"/>
    <property type="match status" value="1"/>
</dbReference>
<dbReference type="Gene3D" id="3.40.50.800">
    <property type="entry name" value="Anticodon-binding domain"/>
    <property type="match status" value="1"/>
</dbReference>
<dbReference type="Gene3D" id="3.30.930.10">
    <property type="entry name" value="Bira Bifunctional Protein, Domain 2"/>
    <property type="match status" value="1"/>
</dbReference>
<dbReference type="HAMAP" id="MF_00127">
    <property type="entry name" value="His_tRNA_synth"/>
    <property type="match status" value="1"/>
</dbReference>
<dbReference type="InterPro" id="IPR006195">
    <property type="entry name" value="aa-tRNA-synth_II"/>
</dbReference>
<dbReference type="InterPro" id="IPR045864">
    <property type="entry name" value="aa-tRNA-synth_II/BPL/LPL"/>
</dbReference>
<dbReference type="InterPro" id="IPR004154">
    <property type="entry name" value="Anticodon-bd"/>
</dbReference>
<dbReference type="InterPro" id="IPR036621">
    <property type="entry name" value="Anticodon-bd_dom_sf"/>
</dbReference>
<dbReference type="InterPro" id="IPR015807">
    <property type="entry name" value="His-tRNA-ligase"/>
</dbReference>
<dbReference type="InterPro" id="IPR041715">
    <property type="entry name" value="HisRS-like_core"/>
</dbReference>
<dbReference type="InterPro" id="IPR004516">
    <property type="entry name" value="HisRS/HisZ"/>
</dbReference>
<dbReference type="InterPro" id="IPR033656">
    <property type="entry name" value="HisRS_anticodon"/>
</dbReference>
<dbReference type="NCBIfam" id="TIGR00442">
    <property type="entry name" value="hisS"/>
    <property type="match status" value="1"/>
</dbReference>
<dbReference type="PANTHER" id="PTHR43707:SF1">
    <property type="entry name" value="HISTIDINE--TRNA LIGASE, MITOCHONDRIAL-RELATED"/>
    <property type="match status" value="1"/>
</dbReference>
<dbReference type="PANTHER" id="PTHR43707">
    <property type="entry name" value="HISTIDYL-TRNA SYNTHETASE"/>
    <property type="match status" value="1"/>
</dbReference>
<dbReference type="Pfam" id="PF03129">
    <property type="entry name" value="HGTP_anticodon"/>
    <property type="match status" value="1"/>
</dbReference>
<dbReference type="Pfam" id="PF13393">
    <property type="entry name" value="tRNA-synt_His"/>
    <property type="match status" value="1"/>
</dbReference>
<dbReference type="PIRSF" id="PIRSF001549">
    <property type="entry name" value="His-tRNA_synth"/>
    <property type="match status" value="1"/>
</dbReference>
<dbReference type="SUPFAM" id="SSF52954">
    <property type="entry name" value="Class II aaRS ABD-related"/>
    <property type="match status" value="1"/>
</dbReference>
<dbReference type="SUPFAM" id="SSF55681">
    <property type="entry name" value="Class II aaRS and biotin synthetases"/>
    <property type="match status" value="1"/>
</dbReference>
<dbReference type="PROSITE" id="PS50862">
    <property type="entry name" value="AA_TRNA_LIGASE_II"/>
    <property type="match status" value="1"/>
</dbReference>